<feature type="chain" id="PRO_0000346067" description="Protoheme IX farnesyltransferase">
    <location>
        <begin position="1"/>
        <end position="287"/>
    </location>
</feature>
<feature type="transmembrane region" description="Helical" evidence="1">
    <location>
        <begin position="9"/>
        <end position="29"/>
    </location>
</feature>
<feature type="transmembrane region" description="Helical" evidence="1">
    <location>
        <begin position="31"/>
        <end position="51"/>
    </location>
</feature>
<feature type="transmembrane region" description="Helical" evidence="1">
    <location>
        <begin position="94"/>
        <end position="114"/>
    </location>
</feature>
<feature type="transmembrane region" description="Helical" evidence="1">
    <location>
        <begin position="132"/>
        <end position="152"/>
    </location>
</feature>
<feature type="transmembrane region" description="Helical" evidence="1">
    <location>
        <begin position="158"/>
        <end position="178"/>
    </location>
</feature>
<feature type="transmembrane region" description="Helical" evidence="1">
    <location>
        <begin position="202"/>
        <end position="222"/>
    </location>
</feature>
<feature type="transmembrane region" description="Helical" evidence="1">
    <location>
        <begin position="228"/>
        <end position="248"/>
    </location>
</feature>
<feature type="transmembrane region" description="Helical" evidence="1">
    <location>
        <begin position="267"/>
        <end position="287"/>
    </location>
</feature>
<gene>
    <name evidence="1" type="primary">ctaB</name>
    <name type="ordered locus">RB11931</name>
</gene>
<comment type="function">
    <text evidence="1">Converts heme B (protoheme IX) to heme O by substitution of the vinyl group on carbon 2 of heme B porphyrin ring with a hydroxyethyl farnesyl side group.</text>
</comment>
<comment type="catalytic activity">
    <reaction evidence="1">
        <text>heme b + (2E,6E)-farnesyl diphosphate + H2O = Fe(II)-heme o + diphosphate</text>
        <dbReference type="Rhea" id="RHEA:28070"/>
        <dbReference type="ChEBI" id="CHEBI:15377"/>
        <dbReference type="ChEBI" id="CHEBI:33019"/>
        <dbReference type="ChEBI" id="CHEBI:60344"/>
        <dbReference type="ChEBI" id="CHEBI:60530"/>
        <dbReference type="ChEBI" id="CHEBI:175763"/>
        <dbReference type="EC" id="2.5.1.141"/>
    </reaction>
</comment>
<comment type="pathway">
    <text evidence="1">Porphyrin-containing compound metabolism; heme O biosynthesis; heme O from protoheme: step 1/1.</text>
</comment>
<comment type="subcellular location">
    <subcellularLocation>
        <location evidence="1">Cell inner membrane</location>
        <topology evidence="1">Multi-pass membrane protein</topology>
    </subcellularLocation>
</comment>
<comment type="miscellaneous">
    <text evidence="1">Carbon 2 of the heme B porphyrin ring is defined according to the Fischer nomenclature.</text>
</comment>
<comment type="similarity">
    <text evidence="1">Belongs to the UbiA prenyltransferase family. Protoheme IX farnesyltransferase subfamily.</text>
</comment>
<comment type="sequence caution" evidence="2">
    <conflict type="erroneous initiation">
        <sequence resource="EMBL-CDS" id="CAD77304"/>
    </conflict>
</comment>
<evidence type="ECO:0000255" key="1">
    <source>
        <dbReference type="HAMAP-Rule" id="MF_00154"/>
    </source>
</evidence>
<evidence type="ECO:0000305" key="2"/>
<dbReference type="EC" id="2.5.1.141" evidence="1"/>
<dbReference type="EMBL" id="BX294154">
    <property type="protein sequence ID" value="CAD77304.1"/>
    <property type="status" value="ALT_INIT"/>
    <property type="molecule type" value="Genomic_DNA"/>
</dbReference>
<dbReference type="RefSeq" id="NP_870229.1">
    <property type="nucleotide sequence ID" value="NC_005027.1"/>
</dbReference>
<dbReference type="SMR" id="Q7UJF4"/>
<dbReference type="FunCoup" id="Q7UJF4">
    <property type="interactions" value="386"/>
</dbReference>
<dbReference type="STRING" id="243090.RB11931"/>
<dbReference type="EnsemblBacteria" id="CAD77304">
    <property type="protein sequence ID" value="CAD77304"/>
    <property type="gene ID" value="RB11931"/>
</dbReference>
<dbReference type="KEGG" id="rba:RB11931"/>
<dbReference type="PATRIC" id="fig|243090.15.peg.5759"/>
<dbReference type="eggNOG" id="COG0109">
    <property type="taxonomic scope" value="Bacteria"/>
</dbReference>
<dbReference type="HOGENOM" id="CLU_029631_3_2_0"/>
<dbReference type="InParanoid" id="Q7UJF4"/>
<dbReference type="OrthoDB" id="9814417at2"/>
<dbReference type="UniPathway" id="UPA00834">
    <property type="reaction ID" value="UER00712"/>
</dbReference>
<dbReference type="Proteomes" id="UP000001025">
    <property type="component" value="Chromosome"/>
</dbReference>
<dbReference type="GO" id="GO:0005886">
    <property type="term" value="C:plasma membrane"/>
    <property type="evidence" value="ECO:0007669"/>
    <property type="project" value="UniProtKB-SubCell"/>
</dbReference>
<dbReference type="GO" id="GO:0008495">
    <property type="term" value="F:protoheme IX farnesyltransferase activity"/>
    <property type="evidence" value="ECO:0000318"/>
    <property type="project" value="GO_Central"/>
</dbReference>
<dbReference type="GO" id="GO:0006783">
    <property type="term" value="P:heme biosynthetic process"/>
    <property type="evidence" value="ECO:0000318"/>
    <property type="project" value="GO_Central"/>
</dbReference>
<dbReference type="GO" id="GO:0048034">
    <property type="term" value="P:heme O biosynthetic process"/>
    <property type="evidence" value="ECO:0007669"/>
    <property type="project" value="UniProtKB-UniRule"/>
</dbReference>
<dbReference type="CDD" id="cd13957">
    <property type="entry name" value="PT_UbiA_Cox10"/>
    <property type="match status" value="1"/>
</dbReference>
<dbReference type="FunFam" id="1.10.357.140:FF:000025">
    <property type="entry name" value="Protoheme IX farnesyltransferase"/>
    <property type="match status" value="1"/>
</dbReference>
<dbReference type="Gene3D" id="1.10.357.140">
    <property type="entry name" value="UbiA prenyltransferase"/>
    <property type="match status" value="1"/>
</dbReference>
<dbReference type="HAMAP" id="MF_00154">
    <property type="entry name" value="CyoE_CtaB"/>
    <property type="match status" value="1"/>
</dbReference>
<dbReference type="InterPro" id="IPR006369">
    <property type="entry name" value="Protohaem_IX_farnesylTrfase"/>
</dbReference>
<dbReference type="InterPro" id="IPR000537">
    <property type="entry name" value="UbiA_prenyltransferase"/>
</dbReference>
<dbReference type="InterPro" id="IPR030470">
    <property type="entry name" value="UbiA_prenylTrfase_CS"/>
</dbReference>
<dbReference type="InterPro" id="IPR044878">
    <property type="entry name" value="UbiA_sf"/>
</dbReference>
<dbReference type="NCBIfam" id="TIGR01473">
    <property type="entry name" value="cyoE_ctaB"/>
    <property type="match status" value="1"/>
</dbReference>
<dbReference type="PANTHER" id="PTHR43448:SF7">
    <property type="entry name" value="4-HYDROXYBENZOATE SOLANESYLTRANSFERASE"/>
    <property type="match status" value="1"/>
</dbReference>
<dbReference type="PANTHER" id="PTHR43448">
    <property type="entry name" value="PROTOHEME IX FARNESYLTRANSFERASE, MITOCHONDRIAL"/>
    <property type="match status" value="1"/>
</dbReference>
<dbReference type="Pfam" id="PF01040">
    <property type="entry name" value="UbiA"/>
    <property type="match status" value="1"/>
</dbReference>
<dbReference type="PROSITE" id="PS00943">
    <property type="entry name" value="UBIA"/>
    <property type="match status" value="1"/>
</dbReference>
<protein>
    <recommendedName>
        <fullName evidence="1">Protoheme IX farnesyltransferase</fullName>
        <ecNumber evidence="1">2.5.1.141</ecNumber>
    </recommendedName>
    <alternativeName>
        <fullName evidence="1">Heme B farnesyltransferase</fullName>
    </alternativeName>
    <alternativeName>
        <fullName evidence="1">Heme O synthase</fullName>
    </alternativeName>
</protein>
<reference key="1">
    <citation type="journal article" date="2003" name="Proc. Natl. Acad. Sci. U.S.A.">
        <title>Complete genome sequence of the marine planctomycete Pirellula sp. strain 1.</title>
        <authorList>
            <person name="Gloeckner F.O."/>
            <person name="Kube M."/>
            <person name="Bauer M."/>
            <person name="Teeling H."/>
            <person name="Lombardot T."/>
            <person name="Ludwig W."/>
            <person name="Gade D."/>
            <person name="Beck A."/>
            <person name="Borzym K."/>
            <person name="Heitmann K."/>
            <person name="Rabus R."/>
            <person name="Schlesner H."/>
            <person name="Amann R."/>
            <person name="Reinhardt R."/>
        </authorList>
    </citation>
    <scope>NUCLEOTIDE SEQUENCE [LARGE SCALE GENOMIC DNA]</scope>
    <source>
        <strain>DSM 10527 / NCIMB 13988 / SH1</strain>
    </source>
</reference>
<accession>Q7UJF4</accession>
<sequence>MIELTKPRIVTMILVTTVASALIAGSATLTLIDWFWLMIGTALIAGSAGAANQVWECRIDRNMPRTANRPVPGGRMSYAVAVALTASSGIAGSIILWLGNGLVPACVGIATWLIYVLVYTPMKTRTAWNTTVGAIAGALPVFIGYTAAGGTLTELPGWMLFGVLACWQYPHFMAIAWLYRTQYAEAGFCMTTTVEPTGRHAAWQSILGSVALATCGVVLAWFPDGQWVASAASVLATVLILAASWPLLRASLNFRANPNDKTARKMLRWSLVVLPAVLLVMTLRASL</sequence>
<keyword id="KW-0997">Cell inner membrane</keyword>
<keyword id="KW-1003">Cell membrane</keyword>
<keyword id="KW-0350">Heme biosynthesis</keyword>
<keyword id="KW-0472">Membrane</keyword>
<keyword id="KW-1185">Reference proteome</keyword>
<keyword id="KW-0808">Transferase</keyword>
<keyword id="KW-0812">Transmembrane</keyword>
<keyword id="KW-1133">Transmembrane helix</keyword>
<name>COXX_RHOBA</name>
<proteinExistence type="inferred from homology"/>
<organism>
    <name type="scientific">Rhodopirellula baltica (strain DSM 10527 / NCIMB 13988 / SH1)</name>
    <dbReference type="NCBI Taxonomy" id="243090"/>
    <lineage>
        <taxon>Bacteria</taxon>
        <taxon>Pseudomonadati</taxon>
        <taxon>Planctomycetota</taxon>
        <taxon>Planctomycetia</taxon>
        <taxon>Pirellulales</taxon>
        <taxon>Pirellulaceae</taxon>
        <taxon>Rhodopirellula</taxon>
    </lineage>
</organism>